<keyword id="KW-0027">Amidation</keyword>
<keyword id="KW-0903">Direct protein sequencing</keyword>
<keyword id="KW-1015">Disulfide bond</keyword>
<keyword id="KW-0872">Ion channel impairing toxin</keyword>
<keyword id="KW-0528">Neurotoxin</keyword>
<keyword id="KW-0964">Secreted</keyword>
<keyword id="KW-0732">Signal</keyword>
<keyword id="KW-0800">Toxin</keyword>
<keyword id="KW-0738">Voltage-gated sodium channel impairing toxin</keyword>
<organism>
    <name type="scientific">Leiurus hebraeus</name>
    <name type="common">Hebrew deathstalker scorpion</name>
    <name type="synonym">Leiurus quinquestriatus hebraeus</name>
    <dbReference type="NCBI Taxonomy" id="2899558"/>
    <lineage>
        <taxon>Eukaryota</taxon>
        <taxon>Metazoa</taxon>
        <taxon>Ecdysozoa</taxon>
        <taxon>Arthropoda</taxon>
        <taxon>Chelicerata</taxon>
        <taxon>Arachnida</taxon>
        <taxon>Scorpiones</taxon>
        <taxon>Buthida</taxon>
        <taxon>Buthoidea</taxon>
        <taxon>Buthidae</taxon>
        <taxon>Leiurus</taxon>
    </lineage>
</organism>
<evidence type="ECO:0000250" key="1"/>
<evidence type="ECO:0000255" key="2">
    <source>
        <dbReference type="PROSITE-ProRule" id="PRU01210"/>
    </source>
</evidence>
<evidence type="ECO:0000269" key="3">
    <source>
    </source>
</evidence>
<evidence type="ECO:0000305" key="4"/>
<reference key="1">
    <citation type="journal article" date="2005" name="Biochemistry">
        <title>Genetic polymorphism and expression of a highly potent scorpion depressant toxin enable refinement of the effects on insect Na channels and illuminate the key role of Asn-58.</title>
        <authorList>
            <person name="Strugatsky D."/>
            <person name="Zilberberg N."/>
            <person name="Stankiewicz M."/>
            <person name="Ilan N."/>
            <person name="Turkov M."/>
            <person name="Cohen L."/>
            <person name="Pelhate M."/>
            <person name="Gilles N."/>
            <person name="Gordon D."/>
            <person name="Gurevitz M."/>
        </authorList>
    </citation>
    <scope>NUCLEOTIDE SEQUENCE [MRNA]</scope>
    <scope>PARTIAL PROTEIN SEQUENCE</scope>
    <scope>FUNCTION</scope>
    <scope>TOXIC DOSE</scope>
    <source>
        <tissue>Venom</tissue>
        <tissue>Venom gland</tissue>
    </source>
</reference>
<name>SIX3D_LEIHE</name>
<sequence>MKLLLLLTISASMLIEGLVNADGYIRGGDGCKVSCVINHVFCDNECKAAGGSYGYCWGWGLACWCEGLPAEREWDYETNTCGGKK</sequence>
<accession>P0C5I6</accession>
<protein>
    <recommendedName>
        <fullName>Beta-insect depressant toxin Lqh-dprIT3d</fullName>
    </recommendedName>
</protein>
<comment type="function">
    <text evidence="3">Depressant insect beta-toxins cause a transient contraction paralysis followed by a slow flaccid paralysis. They bind voltage-independently at site-4 of sodium channels (Nav) and block action potentials, primarily by depolarizing the axonal membrane and suppressing the sodium current. This depressant toxin is active only on insects. It is found in a relatively small amount in the venom, and its activity on insects is 10-fold higher compared to other known depressant toxins.</text>
</comment>
<comment type="subcellular location">
    <subcellularLocation>
        <location>Secreted</location>
    </subcellularLocation>
</comment>
<comment type="tissue specificity">
    <text>Expressed by the venom gland.</text>
</comment>
<comment type="domain">
    <text evidence="4">Has the structural arrangement of an alpha-helix connected to antiparallel beta-sheets by disulfide bonds (CS-alpha/beta).</text>
</comment>
<comment type="toxic dose">
    <text evidence="3">PD(50) is 3-5 ng/100 mg of body weight of Sarcophaga larvae for both contraction and flaccid paralysis.</text>
</comment>
<comment type="similarity">
    <text evidence="4">Belongs to the long (4 C-C) scorpion toxin superfamily. Sodium channel inhibitor family. Beta subfamily.</text>
</comment>
<feature type="signal peptide">
    <location>
        <begin position="1"/>
        <end position="21"/>
    </location>
</feature>
<feature type="chain" id="PRO_0000307614" description="Beta-insect depressant toxin Lqh-dprIT3d">
    <location>
        <begin position="22"/>
        <end position="82"/>
    </location>
</feature>
<feature type="domain" description="LCN-type CS-alpha/beta" evidence="2">
    <location>
        <begin position="22"/>
        <end position="82"/>
    </location>
</feature>
<feature type="site" description="Important for toxicity">
    <location>
        <position position="79"/>
    </location>
</feature>
<feature type="modified residue" description="Glycine amide" evidence="1">
    <location>
        <position position="82"/>
    </location>
</feature>
<feature type="disulfide bond" evidence="2">
    <location>
        <begin position="31"/>
        <end position="81"/>
    </location>
</feature>
<feature type="disulfide bond" evidence="2">
    <location>
        <begin position="35"/>
        <end position="56"/>
    </location>
</feature>
<feature type="disulfide bond" evidence="2">
    <location>
        <begin position="42"/>
        <end position="63"/>
    </location>
</feature>
<feature type="disulfide bond" evidence="2">
    <location>
        <begin position="46"/>
        <end position="65"/>
    </location>
</feature>
<dbReference type="SMR" id="P0C5I6"/>
<dbReference type="GO" id="GO:0005576">
    <property type="term" value="C:extracellular region"/>
    <property type="evidence" value="ECO:0007669"/>
    <property type="project" value="UniProtKB-SubCell"/>
</dbReference>
<dbReference type="GO" id="GO:0019871">
    <property type="term" value="F:sodium channel inhibitor activity"/>
    <property type="evidence" value="ECO:0007669"/>
    <property type="project" value="InterPro"/>
</dbReference>
<dbReference type="GO" id="GO:0090729">
    <property type="term" value="F:toxin activity"/>
    <property type="evidence" value="ECO:0007669"/>
    <property type="project" value="UniProtKB-KW"/>
</dbReference>
<dbReference type="GO" id="GO:0006952">
    <property type="term" value="P:defense response"/>
    <property type="evidence" value="ECO:0007669"/>
    <property type="project" value="InterPro"/>
</dbReference>
<dbReference type="CDD" id="cd23106">
    <property type="entry name" value="neurotoxins_LC_scorpion"/>
    <property type="match status" value="1"/>
</dbReference>
<dbReference type="Gene3D" id="3.30.30.10">
    <property type="entry name" value="Knottin, scorpion toxin-like"/>
    <property type="match status" value="1"/>
</dbReference>
<dbReference type="InterPro" id="IPR044062">
    <property type="entry name" value="LCN-type_CS_alpha_beta_dom"/>
</dbReference>
<dbReference type="InterPro" id="IPR003614">
    <property type="entry name" value="Scorpion_toxin-like"/>
</dbReference>
<dbReference type="InterPro" id="IPR036574">
    <property type="entry name" value="Scorpion_toxin-like_sf"/>
</dbReference>
<dbReference type="InterPro" id="IPR018218">
    <property type="entry name" value="Scorpion_toxinL"/>
</dbReference>
<dbReference type="InterPro" id="IPR002061">
    <property type="entry name" value="Scorpion_toxinL/defensin"/>
</dbReference>
<dbReference type="Pfam" id="PF00537">
    <property type="entry name" value="Toxin_3"/>
    <property type="match status" value="1"/>
</dbReference>
<dbReference type="PRINTS" id="PR00285">
    <property type="entry name" value="SCORPNTOXIN"/>
</dbReference>
<dbReference type="SMART" id="SM00505">
    <property type="entry name" value="Knot1"/>
    <property type="match status" value="1"/>
</dbReference>
<dbReference type="SUPFAM" id="SSF57095">
    <property type="entry name" value="Scorpion toxin-like"/>
    <property type="match status" value="1"/>
</dbReference>
<dbReference type="PROSITE" id="PS51863">
    <property type="entry name" value="LCN_CSAB"/>
    <property type="match status" value="1"/>
</dbReference>
<proteinExistence type="evidence at protein level"/>